<comment type="function">
    <text evidence="1">Catalyzes the decarboxylation of orotidine 5'-monophosphate (OMP) to uridine 5'-monophosphate (UMP).</text>
</comment>
<comment type="catalytic activity">
    <reaction evidence="1">
        <text>orotidine 5'-phosphate + H(+) = UMP + CO2</text>
        <dbReference type="Rhea" id="RHEA:11596"/>
        <dbReference type="ChEBI" id="CHEBI:15378"/>
        <dbReference type="ChEBI" id="CHEBI:16526"/>
        <dbReference type="ChEBI" id="CHEBI:57538"/>
        <dbReference type="ChEBI" id="CHEBI:57865"/>
        <dbReference type="EC" id="4.1.1.23"/>
    </reaction>
</comment>
<comment type="pathway">
    <text evidence="1">Pyrimidine metabolism; UMP biosynthesis via de novo pathway; UMP from orotate: step 2/2.</text>
</comment>
<comment type="subunit">
    <text evidence="1">Homodimer.</text>
</comment>
<comment type="similarity">
    <text evidence="1">Belongs to the OMP decarboxylase family. Type 1 subfamily.</text>
</comment>
<name>PYRF_SYNWW</name>
<reference key="1">
    <citation type="journal article" date="2010" name="Environ. Microbiol.">
        <title>The genome of Syntrophomonas wolfei: new insights into syntrophic metabolism and biohydrogen production.</title>
        <authorList>
            <person name="Sieber J.R."/>
            <person name="Sims D.R."/>
            <person name="Han C."/>
            <person name="Kim E."/>
            <person name="Lykidis A."/>
            <person name="Lapidus A.L."/>
            <person name="McDonnald E."/>
            <person name="Rohlin L."/>
            <person name="Culley D.E."/>
            <person name="Gunsalus R."/>
            <person name="McInerney M.J."/>
        </authorList>
    </citation>
    <scope>NUCLEOTIDE SEQUENCE [LARGE SCALE GENOMIC DNA]</scope>
    <source>
        <strain>DSM 2245B / Goettingen</strain>
    </source>
</reference>
<organism>
    <name type="scientific">Syntrophomonas wolfei subsp. wolfei (strain DSM 2245B / Goettingen)</name>
    <dbReference type="NCBI Taxonomy" id="335541"/>
    <lineage>
        <taxon>Bacteria</taxon>
        <taxon>Bacillati</taxon>
        <taxon>Bacillota</taxon>
        <taxon>Clostridia</taxon>
        <taxon>Eubacteriales</taxon>
        <taxon>Syntrophomonadaceae</taxon>
        <taxon>Syntrophomonas</taxon>
    </lineage>
</organism>
<protein>
    <recommendedName>
        <fullName evidence="1">Orotidine 5'-phosphate decarboxylase</fullName>
        <ecNumber evidence="1">4.1.1.23</ecNumber>
    </recommendedName>
    <alternativeName>
        <fullName evidence="1">OMP decarboxylase</fullName>
        <shortName evidence="1">OMPDCase</shortName>
        <shortName evidence="1">OMPdecase</shortName>
    </alternativeName>
</protein>
<accession>Q0AXG7</accession>
<keyword id="KW-0210">Decarboxylase</keyword>
<keyword id="KW-0456">Lyase</keyword>
<keyword id="KW-0665">Pyrimidine biosynthesis</keyword>
<keyword id="KW-1185">Reference proteome</keyword>
<proteinExistence type="inferred from homology"/>
<sequence length="239" mass="25824">MQAQERIILALDVGSREQALALVKDLAPHVGAFKVGMQLFNSCGPSIVEEINQLGGRVFLDLKFHDIPNTVAAAGRVITRLNCFMFNVHAAGGREMMRQVVEEVKNEAKKLAVAAPLSLAVTVLTSISQEQLEEEIGVKGMKLKDLVVKWALMAKECGISGVVSSPQEIEAIRAACGPEFKIVTPGIRPAWSEKNDQKRITTPGQALQMGADFMVIGRPITQAANPVEAALKIIGELEE</sequence>
<feature type="chain" id="PRO_1000138567" description="Orotidine 5'-phosphate decarboxylase">
    <location>
        <begin position="1"/>
        <end position="239"/>
    </location>
</feature>
<feature type="active site" description="Proton donor" evidence="1">
    <location>
        <position position="63"/>
    </location>
</feature>
<feature type="binding site" evidence="1">
    <location>
        <position position="12"/>
    </location>
    <ligand>
        <name>substrate</name>
    </ligand>
</feature>
<feature type="binding site" evidence="1">
    <location>
        <position position="34"/>
    </location>
    <ligand>
        <name>substrate</name>
    </ligand>
</feature>
<feature type="binding site" evidence="1">
    <location>
        <begin position="61"/>
        <end position="70"/>
    </location>
    <ligand>
        <name>substrate</name>
    </ligand>
</feature>
<feature type="binding site" evidence="1">
    <location>
        <position position="125"/>
    </location>
    <ligand>
        <name>substrate</name>
    </ligand>
</feature>
<feature type="binding site" evidence="1">
    <location>
        <position position="188"/>
    </location>
    <ligand>
        <name>substrate</name>
    </ligand>
</feature>
<feature type="binding site" evidence="1">
    <location>
        <position position="197"/>
    </location>
    <ligand>
        <name>substrate</name>
    </ligand>
</feature>
<feature type="binding site" evidence="1">
    <location>
        <position position="217"/>
    </location>
    <ligand>
        <name>substrate</name>
    </ligand>
</feature>
<feature type="binding site" evidence="1">
    <location>
        <position position="218"/>
    </location>
    <ligand>
        <name>substrate</name>
    </ligand>
</feature>
<evidence type="ECO:0000255" key="1">
    <source>
        <dbReference type="HAMAP-Rule" id="MF_01200"/>
    </source>
</evidence>
<dbReference type="EC" id="4.1.1.23" evidence="1"/>
<dbReference type="EMBL" id="CP000448">
    <property type="protein sequence ID" value="ABI68587.1"/>
    <property type="molecule type" value="Genomic_DNA"/>
</dbReference>
<dbReference type="RefSeq" id="WP_011640689.1">
    <property type="nucleotide sequence ID" value="NC_008346.1"/>
</dbReference>
<dbReference type="SMR" id="Q0AXG7"/>
<dbReference type="STRING" id="335541.Swol_1278"/>
<dbReference type="KEGG" id="swo:Swol_1278"/>
<dbReference type="eggNOG" id="COG0284">
    <property type="taxonomic scope" value="Bacteria"/>
</dbReference>
<dbReference type="HOGENOM" id="CLU_067069_1_0_9"/>
<dbReference type="OrthoDB" id="9806203at2"/>
<dbReference type="UniPathway" id="UPA00070">
    <property type="reaction ID" value="UER00120"/>
</dbReference>
<dbReference type="Proteomes" id="UP000001968">
    <property type="component" value="Chromosome"/>
</dbReference>
<dbReference type="GO" id="GO:0005829">
    <property type="term" value="C:cytosol"/>
    <property type="evidence" value="ECO:0007669"/>
    <property type="project" value="TreeGrafter"/>
</dbReference>
<dbReference type="GO" id="GO:0004590">
    <property type="term" value="F:orotidine-5'-phosphate decarboxylase activity"/>
    <property type="evidence" value="ECO:0007669"/>
    <property type="project" value="UniProtKB-UniRule"/>
</dbReference>
<dbReference type="GO" id="GO:0006207">
    <property type="term" value="P:'de novo' pyrimidine nucleobase biosynthetic process"/>
    <property type="evidence" value="ECO:0007669"/>
    <property type="project" value="InterPro"/>
</dbReference>
<dbReference type="GO" id="GO:0044205">
    <property type="term" value="P:'de novo' UMP biosynthetic process"/>
    <property type="evidence" value="ECO:0007669"/>
    <property type="project" value="UniProtKB-UniRule"/>
</dbReference>
<dbReference type="CDD" id="cd04725">
    <property type="entry name" value="OMP_decarboxylase_like"/>
    <property type="match status" value="1"/>
</dbReference>
<dbReference type="FunFam" id="3.20.20.70:FF:000015">
    <property type="entry name" value="Orotidine 5'-phosphate decarboxylase"/>
    <property type="match status" value="1"/>
</dbReference>
<dbReference type="Gene3D" id="3.20.20.70">
    <property type="entry name" value="Aldolase class I"/>
    <property type="match status" value="1"/>
</dbReference>
<dbReference type="HAMAP" id="MF_01200_B">
    <property type="entry name" value="OMPdecase_type1_B"/>
    <property type="match status" value="1"/>
</dbReference>
<dbReference type="InterPro" id="IPR013785">
    <property type="entry name" value="Aldolase_TIM"/>
</dbReference>
<dbReference type="InterPro" id="IPR014732">
    <property type="entry name" value="OMPdecase"/>
</dbReference>
<dbReference type="InterPro" id="IPR018089">
    <property type="entry name" value="OMPdecase_AS"/>
</dbReference>
<dbReference type="InterPro" id="IPR047596">
    <property type="entry name" value="OMPdecase_bac"/>
</dbReference>
<dbReference type="InterPro" id="IPR001754">
    <property type="entry name" value="OMPdeCOase_dom"/>
</dbReference>
<dbReference type="InterPro" id="IPR011060">
    <property type="entry name" value="RibuloseP-bd_barrel"/>
</dbReference>
<dbReference type="NCBIfam" id="NF001273">
    <property type="entry name" value="PRK00230.1"/>
    <property type="match status" value="1"/>
</dbReference>
<dbReference type="NCBIfam" id="TIGR01740">
    <property type="entry name" value="pyrF"/>
    <property type="match status" value="1"/>
</dbReference>
<dbReference type="PANTHER" id="PTHR32119">
    <property type="entry name" value="OROTIDINE 5'-PHOSPHATE DECARBOXYLASE"/>
    <property type="match status" value="1"/>
</dbReference>
<dbReference type="PANTHER" id="PTHR32119:SF2">
    <property type="entry name" value="OROTIDINE 5'-PHOSPHATE DECARBOXYLASE"/>
    <property type="match status" value="1"/>
</dbReference>
<dbReference type="Pfam" id="PF00215">
    <property type="entry name" value="OMPdecase"/>
    <property type="match status" value="1"/>
</dbReference>
<dbReference type="SMART" id="SM00934">
    <property type="entry name" value="OMPdecase"/>
    <property type="match status" value="1"/>
</dbReference>
<dbReference type="SUPFAM" id="SSF51366">
    <property type="entry name" value="Ribulose-phoshate binding barrel"/>
    <property type="match status" value="1"/>
</dbReference>
<dbReference type="PROSITE" id="PS00156">
    <property type="entry name" value="OMPDECASE"/>
    <property type="match status" value="1"/>
</dbReference>
<gene>
    <name evidence="1" type="primary">pyrF</name>
    <name type="ordered locus">Swol_1278</name>
</gene>